<keyword id="KW-0732">Signal</keyword>
<reference key="1">
    <citation type="journal article" date="2005" name="J. Bacteriol.">
        <title>Completion of the genome sequence of Brucella abortus and comparison to the highly similar genomes of Brucella melitensis and Brucella suis.</title>
        <authorList>
            <person name="Halling S.M."/>
            <person name="Peterson-Burch B.D."/>
            <person name="Bricker B.J."/>
            <person name="Zuerner R.L."/>
            <person name="Qing Z."/>
            <person name="Li L.-L."/>
            <person name="Kapur V."/>
            <person name="Alt D.P."/>
            <person name="Olsen S.C."/>
        </authorList>
    </citation>
    <scope>NUCLEOTIDE SEQUENCE [LARGE SCALE GENOMIC DNA]</scope>
    <source>
        <strain>9-941</strain>
    </source>
</reference>
<name>Y366_BRUAB</name>
<accession>Q57F20</accession>
<organism>
    <name type="scientific">Brucella abortus biovar 1 (strain 9-941)</name>
    <dbReference type="NCBI Taxonomy" id="262698"/>
    <lineage>
        <taxon>Bacteria</taxon>
        <taxon>Pseudomonadati</taxon>
        <taxon>Pseudomonadota</taxon>
        <taxon>Alphaproteobacteria</taxon>
        <taxon>Hyphomicrobiales</taxon>
        <taxon>Brucellaceae</taxon>
        <taxon>Brucella/Ochrobactrum group</taxon>
        <taxon>Brucella</taxon>
    </lineage>
</organism>
<comment type="similarity">
    <text evidence="2">Belongs to the IalB family.</text>
</comment>
<sequence length="173" mass="18039">MKNYRAIGLAFTFTALSSLSAFAASLPGGASTLQETYQDWTVSCQSQKDTTACVMRQEQSSAQTGQRVLTAELRNVAGGKVDGVLLMPFGLDLAKGASLKIDDTAGPNLTFSTCLPQGCLAPVSFDAKQVAALKSGTNINVTTTALSPSQPVAFKISLKGFGAALDRIQALTK</sequence>
<proteinExistence type="inferred from homology"/>
<feature type="signal peptide" evidence="1">
    <location>
        <begin position="1"/>
        <end position="23"/>
    </location>
</feature>
<feature type="chain" id="PRO_0000284472" description="Invasion protein B homolog BruAb1_0366">
    <location>
        <begin position="24"/>
        <end position="173"/>
    </location>
</feature>
<gene>
    <name type="ordered locus">BruAb1_0366</name>
</gene>
<evidence type="ECO:0000255" key="1"/>
<evidence type="ECO:0000305" key="2"/>
<protein>
    <recommendedName>
        <fullName>Invasion protein B homolog BruAb1_0366</fullName>
    </recommendedName>
</protein>
<dbReference type="EMBL" id="AE017223">
    <property type="protein sequence ID" value="AAX73764.1"/>
    <property type="molecule type" value="Genomic_DNA"/>
</dbReference>
<dbReference type="RefSeq" id="WP_002963504.1">
    <property type="nucleotide sequence ID" value="NC_006932.1"/>
</dbReference>
<dbReference type="SMR" id="Q57F20"/>
<dbReference type="EnsemblBacteria" id="AAX73764">
    <property type="protein sequence ID" value="AAX73764"/>
    <property type="gene ID" value="BruAb1_0366"/>
</dbReference>
<dbReference type="KEGG" id="bmb:BruAb1_0366"/>
<dbReference type="HOGENOM" id="CLU_096085_3_0_5"/>
<dbReference type="Proteomes" id="UP000000540">
    <property type="component" value="Chromosome I"/>
</dbReference>
<dbReference type="Gene3D" id="2.60.40.1880">
    <property type="entry name" value="Invasion associated locus B (IalB) protein"/>
    <property type="match status" value="1"/>
</dbReference>
<dbReference type="InterPro" id="IPR038696">
    <property type="entry name" value="IalB_sf"/>
</dbReference>
<dbReference type="InterPro" id="IPR010642">
    <property type="entry name" value="Invasion_prot_B"/>
</dbReference>
<dbReference type="Pfam" id="PF06776">
    <property type="entry name" value="IalB"/>
    <property type="match status" value="1"/>
</dbReference>